<name>DAPB_OLEA2</name>
<feature type="chain" id="PRO_0000228346" description="4-hydroxy-tetrahydrodipicolinate reductase">
    <location>
        <begin position="1"/>
        <end position="259"/>
    </location>
</feature>
<feature type="active site" description="Proton donor/acceptor" evidence="1">
    <location>
        <position position="149"/>
    </location>
</feature>
<feature type="active site" description="Proton donor" evidence="1">
    <location>
        <position position="153"/>
    </location>
</feature>
<feature type="binding site" evidence="1">
    <location>
        <begin position="9"/>
        <end position="14"/>
    </location>
    <ligand>
        <name>NAD(+)</name>
        <dbReference type="ChEBI" id="CHEBI:57540"/>
    </ligand>
</feature>
<feature type="binding site" evidence="1">
    <location>
        <position position="35"/>
    </location>
    <ligand>
        <name>NAD(+)</name>
        <dbReference type="ChEBI" id="CHEBI:57540"/>
    </ligand>
</feature>
<feature type="binding site" evidence="1">
    <location>
        <position position="36"/>
    </location>
    <ligand>
        <name>NADP(+)</name>
        <dbReference type="ChEBI" id="CHEBI:58349"/>
    </ligand>
</feature>
<feature type="binding site" evidence="1">
    <location>
        <begin position="92"/>
        <end position="94"/>
    </location>
    <ligand>
        <name>NAD(+)</name>
        <dbReference type="ChEBI" id="CHEBI:57540"/>
    </ligand>
</feature>
<feature type="binding site" evidence="1">
    <location>
        <begin position="116"/>
        <end position="119"/>
    </location>
    <ligand>
        <name>NAD(+)</name>
        <dbReference type="ChEBI" id="CHEBI:57540"/>
    </ligand>
</feature>
<feature type="binding site" evidence="1">
    <location>
        <position position="150"/>
    </location>
    <ligand>
        <name>(S)-2,3,4,5-tetrahydrodipicolinate</name>
        <dbReference type="ChEBI" id="CHEBI:16845"/>
    </ligand>
</feature>
<feature type="binding site" evidence="1">
    <location>
        <begin position="159"/>
        <end position="160"/>
    </location>
    <ligand>
        <name>(S)-2,3,4,5-tetrahydrodipicolinate</name>
        <dbReference type="ChEBI" id="CHEBI:16845"/>
    </ligand>
</feature>
<reference key="1">
    <citation type="journal article" date="2011" name="J. Bacteriol.">
        <title>Complete genome sequence and updated annotation of Desulfovibrio alaskensis G20.</title>
        <authorList>
            <person name="Hauser L.J."/>
            <person name="Land M.L."/>
            <person name="Brown S.D."/>
            <person name="Larimer F."/>
            <person name="Keller K.L."/>
            <person name="Rapp-Giles B.J."/>
            <person name="Price M.N."/>
            <person name="Lin M."/>
            <person name="Bruce D.C."/>
            <person name="Detter J.C."/>
            <person name="Tapia R."/>
            <person name="Han C.S."/>
            <person name="Goodwin L.A."/>
            <person name="Cheng J.F."/>
            <person name="Pitluck S."/>
            <person name="Copeland A."/>
            <person name="Lucas S."/>
            <person name="Nolan M."/>
            <person name="Lapidus A.L."/>
            <person name="Palumbo A.V."/>
            <person name="Wall J.D."/>
        </authorList>
    </citation>
    <scope>NUCLEOTIDE SEQUENCE [LARGE SCALE GENOMIC DNA]</scope>
    <source>
        <strain>ATCC BAA-1058 / DSM 17464 / G20</strain>
    </source>
</reference>
<keyword id="KW-0028">Amino-acid biosynthesis</keyword>
<keyword id="KW-0963">Cytoplasm</keyword>
<keyword id="KW-0220">Diaminopimelate biosynthesis</keyword>
<keyword id="KW-0457">Lysine biosynthesis</keyword>
<keyword id="KW-0520">NAD</keyword>
<keyword id="KW-0521">NADP</keyword>
<keyword id="KW-0560">Oxidoreductase</keyword>
<keyword id="KW-1185">Reference proteome</keyword>
<proteinExistence type="inferred from homology"/>
<dbReference type="EC" id="1.17.1.8" evidence="1"/>
<dbReference type="EMBL" id="CP000112">
    <property type="protein sequence ID" value="ABB38889.1"/>
    <property type="molecule type" value="Genomic_DNA"/>
</dbReference>
<dbReference type="RefSeq" id="WP_011367993.1">
    <property type="nucleotide sequence ID" value="NC_007519.1"/>
</dbReference>
<dbReference type="SMR" id="Q30ZK7"/>
<dbReference type="STRING" id="207559.Dde_2092"/>
<dbReference type="KEGG" id="dde:Dde_2092"/>
<dbReference type="eggNOG" id="COG0289">
    <property type="taxonomic scope" value="Bacteria"/>
</dbReference>
<dbReference type="HOGENOM" id="CLU_047479_2_1_7"/>
<dbReference type="UniPathway" id="UPA00034">
    <property type="reaction ID" value="UER00018"/>
</dbReference>
<dbReference type="Proteomes" id="UP000002710">
    <property type="component" value="Chromosome"/>
</dbReference>
<dbReference type="GO" id="GO:0005737">
    <property type="term" value="C:cytoplasm"/>
    <property type="evidence" value="ECO:0007669"/>
    <property type="project" value="UniProtKB-SubCell"/>
</dbReference>
<dbReference type="GO" id="GO:0008839">
    <property type="term" value="F:4-hydroxy-tetrahydrodipicolinate reductase"/>
    <property type="evidence" value="ECO:0007669"/>
    <property type="project" value="UniProtKB-EC"/>
</dbReference>
<dbReference type="GO" id="GO:0051287">
    <property type="term" value="F:NAD binding"/>
    <property type="evidence" value="ECO:0007669"/>
    <property type="project" value="UniProtKB-UniRule"/>
</dbReference>
<dbReference type="GO" id="GO:0050661">
    <property type="term" value="F:NADP binding"/>
    <property type="evidence" value="ECO:0007669"/>
    <property type="project" value="UniProtKB-UniRule"/>
</dbReference>
<dbReference type="GO" id="GO:0016726">
    <property type="term" value="F:oxidoreductase activity, acting on CH or CH2 groups, NAD or NADP as acceptor"/>
    <property type="evidence" value="ECO:0007669"/>
    <property type="project" value="UniProtKB-UniRule"/>
</dbReference>
<dbReference type="GO" id="GO:0019877">
    <property type="term" value="P:diaminopimelate biosynthetic process"/>
    <property type="evidence" value="ECO:0007669"/>
    <property type="project" value="UniProtKB-UniRule"/>
</dbReference>
<dbReference type="GO" id="GO:0009089">
    <property type="term" value="P:lysine biosynthetic process via diaminopimelate"/>
    <property type="evidence" value="ECO:0007669"/>
    <property type="project" value="UniProtKB-UniRule"/>
</dbReference>
<dbReference type="CDD" id="cd02274">
    <property type="entry name" value="DHDPR_N"/>
    <property type="match status" value="1"/>
</dbReference>
<dbReference type="FunFam" id="3.30.360.10:FF:000004">
    <property type="entry name" value="4-hydroxy-tetrahydrodipicolinate reductase"/>
    <property type="match status" value="1"/>
</dbReference>
<dbReference type="Gene3D" id="3.30.360.10">
    <property type="entry name" value="Dihydrodipicolinate Reductase, domain 2"/>
    <property type="match status" value="1"/>
</dbReference>
<dbReference type="Gene3D" id="3.40.50.720">
    <property type="entry name" value="NAD(P)-binding Rossmann-like Domain"/>
    <property type="match status" value="1"/>
</dbReference>
<dbReference type="HAMAP" id="MF_00102">
    <property type="entry name" value="DapB"/>
    <property type="match status" value="1"/>
</dbReference>
<dbReference type="InterPro" id="IPR022663">
    <property type="entry name" value="DapB_C"/>
</dbReference>
<dbReference type="InterPro" id="IPR000846">
    <property type="entry name" value="DapB_N"/>
</dbReference>
<dbReference type="InterPro" id="IPR023940">
    <property type="entry name" value="DHDPR_bac"/>
</dbReference>
<dbReference type="InterPro" id="IPR036291">
    <property type="entry name" value="NAD(P)-bd_dom_sf"/>
</dbReference>
<dbReference type="NCBIfam" id="TIGR00036">
    <property type="entry name" value="dapB"/>
    <property type="match status" value="1"/>
</dbReference>
<dbReference type="PANTHER" id="PTHR20836:SF0">
    <property type="entry name" value="4-HYDROXY-TETRAHYDRODIPICOLINATE REDUCTASE 1, CHLOROPLASTIC-RELATED"/>
    <property type="match status" value="1"/>
</dbReference>
<dbReference type="PANTHER" id="PTHR20836">
    <property type="entry name" value="DIHYDRODIPICOLINATE REDUCTASE"/>
    <property type="match status" value="1"/>
</dbReference>
<dbReference type="Pfam" id="PF05173">
    <property type="entry name" value="DapB_C"/>
    <property type="match status" value="1"/>
</dbReference>
<dbReference type="Pfam" id="PF01113">
    <property type="entry name" value="DapB_N"/>
    <property type="match status" value="1"/>
</dbReference>
<dbReference type="PIRSF" id="PIRSF000161">
    <property type="entry name" value="DHPR"/>
    <property type="match status" value="1"/>
</dbReference>
<dbReference type="SUPFAM" id="SSF55347">
    <property type="entry name" value="Glyceraldehyde-3-phosphate dehydrogenase-like, C-terminal domain"/>
    <property type="match status" value="1"/>
</dbReference>
<dbReference type="SUPFAM" id="SSF51735">
    <property type="entry name" value="NAD(P)-binding Rossmann-fold domains"/>
    <property type="match status" value="1"/>
</dbReference>
<protein>
    <recommendedName>
        <fullName evidence="1">4-hydroxy-tetrahydrodipicolinate reductase</fullName>
        <shortName evidence="1">HTPA reductase</shortName>
        <ecNumber evidence="1">1.17.1.8</ecNumber>
    </recommendedName>
</protein>
<sequence>MSVSVIVMGAGGRMGTTITGMVRADGECRLAGVVEREGRREGLEHLGCQVAGTLEELLPGMPDAVVIDFTAPEASVHNARACARHGSGLVIGTTGFTEEQKAELADCALQTPVFWAPNMSVGVNVLLKILPQLVTLLGEQYDLEMVELHHNKKKDSPSGTALRLAECLAEARKWDLDTVANYHREGIIGERPHEEIGIQTIRGGDVVGVHTVYALGPGERIEVTHQAHSRETFAAGAIRAAKWLAQNRPGKLYTMSDML</sequence>
<organism>
    <name type="scientific">Oleidesulfovibrio alaskensis (strain ATCC BAA-1058 / DSM 17464 / G20)</name>
    <name type="common">Desulfovibrio alaskensis</name>
    <dbReference type="NCBI Taxonomy" id="207559"/>
    <lineage>
        <taxon>Bacteria</taxon>
        <taxon>Pseudomonadati</taxon>
        <taxon>Thermodesulfobacteriota</taxon>
        <taxon>Desulfovibrionia</taxon>
        <taxon>Desulfovibrionales</taxon>
        <taxon>Desulfovibrionaceae</taxon>
        <taxon>Oleidesulfovibrio</taxon>
    </lineage>
</organism>
<evidence type="ECO:0000255" key="1">
    <source>
        <dbReference type="HAMAP-Rule" id="MF_00102"/>
    </source>
</evidence>
<evidence type="ECO:0000305" key="2"/>
<gene>
    <name evidence="1" type="primary">dapB</name>
    <name type="ordered locus">Dde_2092</name>
</gene>
<comment type="function">
    <text evidence="1">Catalyzes the conversion of 4-hydroxy-tetrahydrodipicolinate (HTPA) to tetrahydrodipicolinate.</text>
</comment>
<comment type="catalytic activity">
    <reaction evidence="1">
        <text>(S)-2,3,4,5-tetrahydrodipicolinate + NAD(+) + H2O = (2S,4S)-4-hydroxy-2,3,4,5-tetrahydrodipicolinate + NADH + H(+)</text>
        <dbReference type="Rhea" id="RHEA:35323"/>
        <dbReference type="ChEBI" id="CHEBI:15377"/>
        <dbReference type="ChEBI" id="CHEBI:15378"/>
        <dbReference type="ChEBI" id="CHEBI:16845"/>
        <dbReference type="ChEBI" id="CHEBI:57540"/>
        <dbReference type="ChEBI" id="CHEBI:57945"/>
        <dbReference type="ChEBI" id="CHEBI:67139"/>
        <dbReference type="EC" id="1.17.1.8"/>
    </reaction>
</comment>
<comment type="catalytic activity">
    <reaction evidence="1">
        <text>(S)-2,3,4,5-tetrahydrodipicolinate + NADP(+) + H2O = (2S,4S)-4-hydroxy-2,3,4,5-tetrahydrodipicolinate + NADPH + H(+)</text>
        <dbReference type="Rhea" id="RHEA:35331"/>
        <dbReference type="ChEBI" id="CHEBI:15377"/>
        <dbReference type="ChEBI" id="CHEBI:15378"/>
        <dbReference type="ChEBI" id="CHEBI:16845"/>
        <dbReference type="ChEBI" id="CHEBI:57783"/>
        <dbReference type="ChEBI" id="CHEBI:58349"/>
        <dbReference type="ChEBI" id="CHEBI:67139"/>
        <dbReference type="EC" id="1.17.1.8"/>
    </reaction>
</comment>
<comment type="pathway">
    <text evidence="1">Amino-acid biosynthesis; L-lysine biosynthesis via DAP pathway; (S)-tetrahydrodipicolinate from L-aspartate: step 4/4.</text>
</comment>
<comment type="subcellular location">
    <subcellularLocation>
        <location evidence="1">Cytoplasm</location>
    </subcellularLocation>
</comment>
<comment type="similarity">
    <text evidence="1">Belongs to the DapB family.</text>
</comment>
<comment type="caution">
    <text evidence="2">Was originally thought to be a dihydrodipicolinate reductase (DHDPR), catalyzing the conversion of dihydrodipicolinate to tetrahydrodipicolinate. However, it was shown in E.coli that the substrate of the enzymatic reaction is not dihydrodipicolinate (DHDP) but in fact (2S,4S)-4-hydroxy-2,3,4,5-tetrahydrodipicolinic acid (HTPA), the product released by the DapA-catalyzed reaction.</text>
</comment>
<accession>Q30ZK7</accession>